<dbReference type="EMBL" id="AE006468">
    <property type="protein sequence ID" value="AAL21414.1"/>
    <property type="molecule type" value="Genomic_DNA"/>
</dbReference>
<dbReference type="RefSeq" id="WP_001177074.1">
    <property type="nucleotide sequence ID" value="NC_003197.2"/>
</dbReference>
<dbReference type="SMR" id="H9L451"/>
<dbReference type="STRING" id="99287.STM2520"/>
<dbReference type="PaxDb" id="99287-STM2520"/>
<dbReference type="KEGG" id="stm:STM2520"/>
<dbReference type="PATRIC" id="fig|99287.12.peg.2657"/>
<dbReference type="HOGENOM" id="CLU_027480_0_1_6"/>
<dbReference type="OMA" id="FTPTKVW"/>
<dbReference type="PhylomeDB" id="H9L451"/>
<dbReference type="BioCyc" id="SENT99287:STM2520-MONOMER"/>
<dbReference type="Proteomes" id="UP000001014">
    <property type="component" value="Chromosome"/>
</dbReference>
<dbReference type="GO" id="GO:0009279">
    <property type="term" value="C:cell outer membrane"/>
    <property type="evidence" value="ECO:0007669"/>
    <property type="project" value="UniProtKB-SubCell"/>
</dbReference>
<dbReference type="GO" id="GO:0043165">
    <property type="term" value="P:Gram-negative-bacterium-type cell outer membrane assembly"/>
    <property type="evidence" value="ECO:0007669"/>
    <property type="project" value="UniProtKB-UniRule"/>
</dbReference>
<dbReference type="GO" id="GO:0051205">
    <property type="term" value="P:protein insertion into membrane"/>
    <property type="evidence" value="ECO:0007669"/>
    <property type="project" value="UniProtKB-UniRule"/>
</dbReference>
<dbReference type="FunFam" id="2.130.10.10:FF:000125">
    <property type="entry name" value="Outer membrane protein assembly factor BamB"/>
    <property type="match status" value="1"/>
</dbReference>
<dbReference type="Gene3D" id="2.130.10.10">
    <property type="entry name" value="YVTN repeat-like/Quinoprotein amine dehydrogenase"/>
    <property type="match status" value="1"/>
</dbReference>
<dbReference type="HAMAP" id="MF_00923">
    <property type="entry name" value="OM_assembly_BamB"/>
    <property type="match status" value="1"/>
</dbReference>
<dbReference type="InterPro" id="IPR017687">
    <property type="entry name" value="BamB"/>
</dbReference>
<dbReference type="InterPro" id="IPR018391">
    <property type="entry name" value="PQQ_b-propeller_rpt"/>
</dbReference>
<dbReference type="InterPro" id="IPR002372">
    <property type="entry name" value="PQQ_rpt_dom"/>
</dbReference>
<dbReference type="InterPro" id="IPR011047">
    <property type="entry name" value="Quinoprotein_ADH-like_sf"/>
</dbReference>
<dbReference type="InterPro" id="IPR015943">
    <property type="entry name" value="WD40/YVTN_repeat-like_dom_sf"/>
</dbReference>
<dbReference type="NCBIfam" id="TIGR03300">
    <property type="entry name" value="assembly_YfgL"/>
    <property type="match status" value="1"/>
</dbReference>
<dbReference type="NCBIfam" id="NF008351">
    <property type="entry name" value="PRK11138.1"/>
    <property type="match status" value="1"/>
</dbReference>
<dbReference type="PANTHER" id="PTHR34512">
    <property type="entry name" value="CELL SURFACE PROTEIN"/>
    <property type="match status" value="1"/>
</dbReference>
<dbReference type="PANTHER" id="PTHR34512:SF30">
    <property type="entry name" value="OUTER MEMBRANE PROTEIN ASSEMBLY FACTOR BAMB"/>
    <property type="match status" value="1"/>
</dbReference>
<dbReference type="Pfam" id="PF13360">
    <property type="entry name" value="PQQ_2"/>
    <property type="match status" value="1"/>
</dbReference>
<dbReference type="SMART" id="SM00564">
    <property type="entry name" value="PQQ"/>
    <property type="match status" value="7"/>
</dbReference>
<dbReference type="SUPFAM" id="SSF50998">
    <property type="entry name" value="Quinoprotein alcohol dehydrogenase-like"/>
    <property type="match status" value="1"/>
</dbReference>
<dbReference type="PROSITE" id="PS51257">
    <property type="entry name" value="PROKAR_LIPOPROTEIN"/>
    <property type="match status" value="1"/>
</dbReference>
<sequence>MQLRKLLLPGLLSVTLLSGCSLFSGEEDVVKMSPLPQVENQFTPTTVWSTSVGNGIGEFYSNLHPVMVDNVVYAADRAGVVKALNADDGKEIWSVNLGEKDGWFSRSSALLSGGVTVAGGHVYIGSEKAEVYALNTSDGTTAWQTKVAGEALSRPVVSDGIVLIHTSNGQLQALNQADGAIKWTVNLDMPSLSLRGESAPATAFGAAIVGGDNGRVSAVLMQQGQMIWQQRISQATGPTEIDRLSDVDTTPVVVNGVVYALAYNGNLTALDLRSGQIMWKRELGSVNDFIVDGDRIYLVDQNDRVLALTTDGGVTLWTQSDLLHRLLTSPVLYNGDLVVGDSEGYLHWINVDDGRFVAQQKVDSSGFLTEPTVADGKLLIQAKDGTVYAITR</sequence>
<gene>
    <name evidence="1" type="primary">bamB</name>
    <name type="ordered locus">STM2520</name>
</gene>
<evidence type="ECO:0000255" key="1">
    <source>
        <dbReference type="HAMAP-Rule" id="MF_00923"/>
    </source>
</evidence>
<reference key="1">
    <citation type="journal article" date="2001" name="Nature">
        <title>Complete genome sequence of Salmonella enterica serovar Typhimurium LT2.</title>
        <authorList>
            <person name="McClelland M."/>
            <person name="Sanderson K.E."/>
            <person name="Spieth J."/>
            <person name="Clifton S.W."/>
            <person name="Latreille P."/>
            <person name="Courtney L."/>
            <person name="Porwollik S."/>
            <person name="Ali J."/>
            <person name="Dante M."/>
            <person name="Du F."/>
            <person name="Hou S."/>
            <person name="Layman D."/>
            <person name="Leonard S."/>
            <person name="Nguyen C."/>
            <person name="Scott K."/>
            <person name="Holmes A."/>
            <person name="Grewal N."/>
            <person name="Mulvaney E."/>
            <person name="Ryan E."/>
            <person name="Sun H."/>
            <person name="Florea L."/>
            <person name="Miller W."/>
            <person name="Stoneking T."/>
            <person name="Nhan M."/>
            <person name="Waterston R."/>
            <person name="Wilson R.K."/>
        </authorList>
    </citation>
    <scope>NUCLEOTIDE SEQUENCE [LARGE SCALE GENOMIC DNA]</scope>
    <source>
        <strain>LT2 / SGSC1412 / ATCC 700720</strain>
    </source>
</reference>
<feature type="signal peptide" evidence="1">
    <location>
        <begin position="1"/>
        <end position="19"/>
    </location>
</feature>
<feature type="chain" id="PRO_0000417687" description="Outer membrane protein assembly factor BamB">
    <location>
        <begin position="20"/>
        <end position="392"/>
    </location>
</feature>
<feature type="lipid moiety-binding region" description="N-palmitoyl cysteine" evidence="1">
    <location>
        <position position="20"/>
    </location>
</feature>
<feature type="lipid moiety-binding region" description="S-diacylglycerol cysteine" evidence="1">
    <location>
        <position position="20"/>
    </location>
</feature>
<accession>H9L451</accession>
<proteinExistence type="inferred from homology"/>
<protein>
    <recommendedName>
        <fullName evidence="1">Outer membrane protein assembly factor BamB</fullName>
    </recommendedName>
</protein>
<keyword id="KW-0998">Cell outer membrane</keyword>
<keyword id="KW-0449">Lipoprotein</keyword>
<keyword id="KW-0472">Membrane</keyword>
<keyword id="KW-0564">Palmitate</keyword>
<keyword id="KW-1185">Reference proteome</keyword>
<keyword id="KW-0732">Signal</keyword>
<organism>
    <name type="scientific">Salmonella typhimurium (strain LT2 / SGSC1412 / ATCC 700720)</name>
    <dbReference type="NCBI Taxonomy" id="99287"/>
    <lineage>
        <taxon>Bacteria</taxon>
        <taxon>Pseudomonadati</taxon>
        <taxon>Pseudomonadota</taxon>
        <taxon>Gammaproteobacteria</taxon>
        <taxon>Enterobacterales</taxon>
        <taxon>Enterobacteriaceae</taxon>
        <taxon>Salmonella</taxon>
    </lineage>
</organism>
<comment type="function">
    <text evidence="1">Part of the outer membrane protein assembly complex, which is involved in assembly and insertion of beta-barrel proteins into the outer membrane.</text>
</comment>
<comment type="subunit">
    <text evidence="1">Part of the Bam complex, which is composed of the outer membrane protein BamA, and four lipoproteins BamB, BamC, BamD and BamE.</text>
</comment>
<comment type="subcellular location">
    <subcellularLocation>
        <location evidence="1">Cell outer membrane</location>
        <topology evidence="1">Lipid-anchor</topology>
    </subcellularLocation>
</comment>
<comment type="similarity">
    <text evidence="1">Belongs to the BamB family.</text>
</comment>
<name>BAMB_SALTY</name>